<comment type="function">
    <text evidence="1">Regulatory subunit of DNA primase, an RNA polymerase that catalyzes the synthesis of short RNA molecules used as primers for DNA polymerase during DNA replication. Stabilizes and modulates the activity of the small subunit, increasing the rate of DNA synthesis, and conferring RNA synthesis capability. The DNA polymerase activity may enable DNA primase to also catalyze primer extension after primer synthesis. May also play a role in DNA repair.</text>
</comment>
<comment type="cofactor">
    <cofactor evidence="1">
        <name>[4Fe-4S] cluster</name>
        <dbReference type="ChEBI" id="CHEBI:49883"/>
    </cofactor>
    <text evidence="1">Binds 1 [4Fe-4S] cluster.</text>
</comment>
<comment type="subunit">
    <text evidence="1">Heterodimer of a small subunit (PriS) and a large subunit (PriL).</text>
</comment>
<comment type="similarity">
    <text evidence="1">Belongs to the eukaryotic-type primase large subunit family.</text>
</comment>
<accession>Q97BA1</accession>
<dbReference type="EMBL" id="BA000011">
    <property type="protein sequence ID" value="BAB59698.1"/>
    <property type="molecule type" value="Genomic_DNA"/>
</dbReference>
<dbReference type="RefSeq" id="WP_010916815.1">
    <property type="nucleotide sequence ID" value="NC_002689.2"/>
</dbReference>
<dbReference type="STRING" id="273116.gene:9381341"/>
<dbReference type="PaxDb" id="273116-14324771"/>
<dbReference type="DNASU" id="1441073"/>
<dbReference type="GeneID" id="1441073"/>
<dbReference type="KEGG" id="tvo:TVG0544022"/>
<dbReference type="eggNOG" id="arCOG03013">
    <property type="taxonomic scope" value="Archaea"/>
</dbReference>
<dbReference type="HOGENOM" id="CLU_052778_0_0_2"/>
<dbReference type="OrthoDB" id="46081at2157"/>
<dbReference type="PhylomeDB" id="Q97BA1"/>
<dbReference type="Proteomes" id="UP000001017">
    <property type="component" value="Chromosome"/>
</dbReference>
<dbReference type="GO" id="GO:1990077">
    <property type="term" value="C:primosome complex"/>
    <property type="evidence" value="ECO:0007669"/>
    <property type="project" value="UniProtKB-KW"/>
</dbReference>
<dbReference type="GO" id="GO:0051539">
    <property type="term" value="F:4 iron, 4 sulfur cluster binding"/>
    <property type="evidence" value="ECO:0007669"/>
    <property type="project" value="UniProtKB-UniRule"/>
</dbReference>
<dbReference type="GO" id="GO:0003899">
    <property type="term" value="F:DNA-directed RNA polymerase activity"/>
    <property type="evidence" value="ECO:0007669"/>
    <property type="project" value="InterPro"/>
</dbReference>
<dbReference type="GO" id="GO:0046872">
    <property type="term" value="F:metal ion binding"/>
    <property type="evidence" value="ECO:0007669"/>
    <property type="project" value="UniProtKB-KW"/>
</dbReference>
<dbReference type="GO" id="GO:0006270">
    <property type="term" value="P:DNA replication initiation"/>
    <property type="evidence" value="ECO:0007669"/>
    <property type="project" value="TreeGrafter"/>
</dbReference>
<dbReference type="GO" id="GO:0006269">
    <property type="term" value="P:DNA replication, synthesis of primer"/>
    <property type="evidence" value="ECO:0007669"/>
    <property type="project" value="UniProtKB-UniRule"/>
</dbReference>
<dbReference type="CDD" id="cd06560">
    <property type="entry name" value="PriL"/>
    <property type="match status" value="1"/>
</dbReference>
<dbReference type="HAMAP" id="MF_00701">
    <property type="entry name" value="DNA_primase_lrg_arc"/>
    <property type="match status" value="1"/>
</dbReference>
<dbReference type="InterPro" id="IPR007238">
    <property type="entry name" value="DNA_primase_lsu_euk/arc"/>
</dbReference>
<dbReference type="InterPro" id="IPR023642">
    <property type="entry name" value="DNA_primase_lsu_PriL"/>
</dbReference>
<dbReference type="NCBIfam" id="NF002589">
    <property type="entry name" value="PRK02249.1-3"/>
    <property type="match status" value="1"/>
</dbReference>
<dbReference type="PANTHER" id="PTHR10537">
    <property type="entry name" value="DNA PRIMASE LARGE SUBUNIT"/>
    <property type="match status" value="1"/>
</dbReference>
<dbReference type="PANTHER" id="PTHR10537:SF3">
    <property type="entry name" value="DNA PRIMASE LARGE SUBUNIT"/>
    <property type="match status" value="1"/>
</dbReference>
<dbReference type="Pfam" id="PF04104">
    <property type="entry name" value="DNA_primase_lrg"/>
    <property type="match status" value="1"/>
</dbReference>
<dbReference type="SUPFAM" id="SSF140914">
    <property type="entry name" value="PriB N-terminal domain-like"/>
    <property type="match status" value="1"/>
</dbReference>
<keyword id="KW-0004">4Fe-4S</keyword>
<keyword id="KW-0235">DNA replication</keyword>
<keyword id="KW-0408">Iron</keyword>
<keyword id="KW-0411">Iron-sulfur</keyword>
<keyword id="KW-0479">Metal-binding</keyword>
<keyword id="KW-0639">Primosome</keyword>
<feature type="chain" id="PRO_0000046790" description="DNA primase large subunit PriL">
    <location>
        <begin position="1"/>
        <end position="327"/>
    </location>
</feature>
<feature type="binding site" evidence="1">
    <location>
        <position position="218"/>
    </location>
    <ligand>
        <name>[4Fe-4S] cluster</name>
        <dbReference type="ChEBI" id="CHEBI:49883"/>
    </ligand>
</feature>
<feature type="binding site" evidence="1">
    <location>
        <position position="290"/>
    </location>
    <ligand>
        <name>[4Fe-4S] cluster</name>
        <dbReference type="ChEBI" id="CHEBI:49883"/>
    </ligand>
</feature>
<feature type="binding site" evidence="1">
    <location>
        <position position="299"/>
    </location>
    <ligand>
        <name>[4Fe-4S] cluster</name>
        <dbReference type="ChEBI" id="CHEBI:49883"/>
    </ligand>
</feature>
<feature type="binding site" evidence="1">
    <location>
        <position position="307"/>
    </location>
    <ligand>
        <name>[4Fe-4S] cluster</name>
        <dbReference type="ChEBI" id="CHEBI:49883"/>
    </ligand>
</feature>
<name>PRIL_THEVO</name>
<proteinExistence type="inferred from homology"/>
<organism>
    <name type="scientific">Thermoplasma volcanium (strain ATCC 51530 / DSM 4299 / JCM 9571 / NBRC 15438 / GSS1)</name>
    <dbReference type="NCBI Taxonomy" id="273116"/>
    <lineage>
        <taxon>Archaea</taxon>
        <taxon>Methanobacteriati</taxon>
        <taxon>Thermoplasmatota</taxon>
        <taxon>Thermoplasmata</taxon>
        <taxon>Thermoplasmatales</taxon>
        <taxon>Thermoplasmataceae</taxon>
        <taxon>Thermoplasma</taxon>
    </lineage>
</organism>
<sequence length="327" mass="37915">MRFPPLLFFQDSEAVKRIANSVRGTKDDDAEIKDHSMRFIRNAISGDQQKEILNVDMLRYIAWVLVALNENIVTARTVIRERDAVEDALKNQQPEDIENFADDLKINMKYNRDLERFEIGVFDFVKYASRVTGSQYRLSNQSVIKGIVYCQKDVAIKILRESFVSNMFKVIDSIDQTTASPVLSDQTDSINELREFYKKSVYAKLTIGRGNTKAFPPCMKEIIRNLHEGINVPHMGRLAIASFLHKVGYTEDEIVEYFRNAPDFDESITRYQIKHLSGEISGVEYSPPKCETMRSNHLCFMDDDKLCHQDWMKHPLTYYEVKSRRLG</sequence>
<protein>
    <recommendedName>
        <fullName evidence="1">DNA primase large subunit PriL</fullName>
    </recommendedName>
</protein>
<gene>
    <name evidence="1" type="primary">priL</name>
    <name type="synonym">priB</name>
    <name type="ordered locus">TV0556</name>
    <name type="ORF">TVG0544022</name>
</gene>
<reference key="1">
    <citation type="journal article" date="2000" name="Proc. Natl. Acad. Sci. U.S.A.">
        <title>Archaeal adaptation to higher temperatures revealed by genomic sequence of Thermoplasma volcanium.</title>
        <authorList>
            <person name="Kawashima T."/>
            <person name="Amano N."/>
            <person name="Koike H."/>
            <person name="Makino S."/>
            <person name="Higuchi S."/>
            <person name="Kawashima-Ohya Y."/>
            <person name="Watanabe K."/>
            <person name="Yamazaki M."/>
            <person name="Kanehori K."/>
            <person name="Kawamoto T."/>
            <person name="Nunoshiba T."/>
            <person name="Yamamoto Y."/>
            <person name="Aramaki H."/>
            <person name="Makino K."/>
            <person name="Suzuki M."/>
        </authorList>
    </citation>
    <scope>NUCLEOTIDE SEQUENCE [LARGE SCALE GENOMIC DNA]</scope>
    <source>
        <strain>ATCC 51530 / DSM 4299 / JCM 9571 / NBRC 15438 / GSS1</strain>
    </source>
</reference>
<evidence type="ECO:0000255" key="1">
    <source>
        <dbReference type="HAMAP-Rule" id="MF_00701"/>
    </source>
</evidence>